<gene>
    <name evidence="1" type="primary">mtfA</name>
    <name type="ordered locus">YPA_1106</name>
</gene>
<proteinExistence type="inferred from homology"/>
<comment type="function">
    <text evidence="1">Involved in the modulation of the activity of the glucose-phosphotransferase system (glucose-PTS). Interacts with the transcriptional repressor Mlc, preventing its interaction with DNA and leading to the modulation of expression of genes regulated by Mlc, including ptsG, which encodes the PTS system glucose-specific EIICB component.</text>
</comment>
<comment type="function">
    <text evidence="1">Shows zinc-dependent metallopeptidase activity.</text>
</comment>
<comment type="cofactor">
    <cofactor evidence="1">
        <name>Zn(2+)</name>
        <dbReference type="ChEBI" id="CHEBI:29105"/>
    </cofactor>
    <text evidence="1">Binds 1 zinc ion per subunit.</text>
</comment>
<comment type="subunit">
    <text evidence="1">Interacts with Mlc.</text>
</comment>
<comment type="subcellular location">
    <subcellularLocation>
        <location evidence="1">Cytoplasm</location>
    </subcellularLocation>
</comment>
<comment type="similarity">
    <text evidence="1">Belongs to the MtfA family.</text>
</comment>
<keyword id="KW-0031">Aminopeptidase</keyword>
<keyword id="KW-0963">Cytoplasm</keyword>
<keyword id="KW-0378">Hydrolase</keyword>
<keyword id="KW-0479">Metal-binding</keyword>
<keyword id="KW-0482">Metalloprotease</keyword>
<keyword id="KW-0645">Protease</keyword>
<keyword id="KW-0862">Zinc</keyword>
<name>MTFA_YERPA</name>
<accession>Q1C8Z9</accession>
<reference key="1">
    <citation type="journal article" date="2006" name="J. Bacteriol.">
        <title>Complete genome sequence of Yersinia pestis strains Antiqua and Nepal516: evidence of gene reduction in an emerging pathogen.</title>
        <authorList>
            <person name="Chain P.S.G."/>
            <person name="Hu P."/>
            <person name="Malfatti S.A."/>
            <person name="Radnedge L."/>
            <person name="Larimer F."/>
            <person name="Vergez L.M."/>
            <person name="Worsham P."/>
            <person name="Chu M.C."/>
            <person name="Andersen G.L."/>
        </authorList>
    </citation>
    <scope>NUCLEOTIDE SEQUENCE [LARGE SCALE GENOMIC DNA]</scope>
    <source>
        <strain>Antiqua</strain>
    </source>
</reference>
<protein>
    <recommendedName>
        <fullName evidence="1">Mlc titration factor A</fullName>
    </recommendedName>
    <alternativeName>
        <fullName evidence="1">Probable zinc metallopeptidase MtfA</fullName>
        <ecNumber evidence="1">3.4.11.-</ecNumber>
    </alternativeName>
</protein>
<evidence type="ECO:0000255" key="1">
    <source>
        <dbReference type="HAMAP-Rule" id="MF_01593"/>
    </source>
</evidence>
<organism>
    <name type="scientific">Yersinia pestis bv. Antiqua (strain Antiqua)</name>
    <dbReference type="NCBI Taxonomy" id="360102"/>
    <lineage>
        <taxon>Bacteria</taxon>
        <taxon>Pseudomonadati</taxon>
        <taxon>Pseudomonadota</taxon>
        <taxon>Gammaproteobacteria</taxon>
        <taxon>Enterobacterales</taxon>
        <taxon>Yersiniaceae</taxon>
        <taxon>Yersinia</taxon>
    </lineage>
</organism>
<dbReference type="EC" id="3.4.11.-" evidence="1"/>
<dbReference type="EMBL" id="CP000308">
    <property type="protein sequence ID" value="ABG13073.1"/>
    <property type="molecule type" value="Genomic_DNA"/>
</dbReference>
<dbReference type="RefSeq" id="WP_002211042.1">
    <property type="nucleotide sequence ID" value="NZ_CP009906.1"/>
</dbReference>
<dbReference type="SMR" id="Q1C8Z9"/>
<dbReference type="GeneID" id="57976845"/>
<dbReference type="KEGG" id="ypa:YPA_1106"/>
<dbReference type="Proteomes" id="UP000001971">
    <property type="component" value="Chromosome"/>
</dbReference>
<dbReference type="GO" id="GO:0005829">
    <property type="term" value="C:cytosol"/>
    <property type="evidence" value="ECO:0007669"/>
    <property type="project" value="TreeGrafter"/>
</dbReference>
<dbReference type="GO" id="GO:0004177">
    <property type="term" value="F:aminopeptidase activity"/>
    <property type="evidence" value="ECO:0007669"/>
    <property type="project" value="UniProtKB-UniRule"/>
</dbReference>
<dbReference type="GO" id="GO:0008237">
    <property type="term" value="F:metallopeptidase activity"/>
    <property type="evidence" value="ECO:0007669"/>
    <property type="project" value="UniProtKB-UniRule"/>
</dbReference>
<dbReference type="GO" id="GO:0008270">
    <property type="term" value="F:zinc ion binding"/>
    <property type="evidence" value="ECO:0007669"/>
    <property type="project" value="UniProtKB-UniRule"/>
</dbReference>
<dbReference type="GO" id="GO:0006508">
    <property type="term" value="P:proteolysis"/>
    <property type="evidence" value="ECO:0007669"/>
    <property type="project" value="UniProtKB-KW"/>
</dbReference>
<dbReference type="CDD" id="cd20169">
    <property type="entry name" value="Peptidase_M90_mtfA"/>
    <property type="match status" value="1"/>
</dbReference>
<dbReference type="FunFam" id="1.10.472.150:FF:000001">
    <property type="entry name" value="Protein MtfA"/>
    <property type="match status" value="1"/>
</dbReference>
<dbReference type="FunFam" id="3.40.390.10:FF:000012">
    <property type="entry name" value="Protein MtfA"/>
    <property type="match status" value="1"/>
</dbReference>
<dbReference type="Gene3D" id="3.40.390.10">
    <property type="entry name" value="Collagenase (Catalytic Domain)"/>
    <property type="match status" value="1"/>
</dbReference>
<dbReference type="Gene3D" id="1.10.472.150">
    <property type="entry name" value="Glucose-regulated metallo-peptidase M90, N-terminal domain"/>
    <property type="match status" value="1"/>
</dbReference>
<dbReference type="HAMAP" id="MF_01593">
    <property type="entry name" value="MtfA"/>
    <property type="match status" value="1"/>
</dbReference>
<dbReference type="InterPro" id="IPR024079">
    <property type="entry name" value="MetalloPept_cat_dom_sf"/>
</dbReference>
<dbReference type="InterPro" id="IPR057256">
    <property type="entry name" value="MtfA_enterob"/>
</dbReference>
<dbReference type="InterPro" id="IPR010384">
    <property type="entry name" value="MtfA_fam"/>
</dbReference>
<dbReference type="InterPro" id="IPR042252">
    <property type="entry name" value="MtfA_N"/>
</dbReference>
<dbReference type="NCBIfam" id="NF011939">
    <property type="entry name" value="PRK15410.1"/>
    <property type="match status" value="1"/>
</dbReference>
<dbReference type="PANTHER" id="PTHR30164">
    <property type="entry name" value="MTFA PEPTIDASE"/>
    <property type="match status" value="1"/>
</dbReference>
<dbReference type="PANTHER" id="PTHR30164:SF2">
    <property type="entry name" value="PROTEIN MTFA"/>
    <property type="match status" value="1"/>
</dbReference>
<dbReference type="Pfam" id="PF06167">
    <property type="entry name" value="Peptidase_M90"/>
    <property type="match status" value="1"/>
</dbReference>
<dbReference type="SUPFAM" id="SSF55486">
    <property type="entry name" value="Metalloproteases ('zincins'), catalytic domain"/>
    <property type="match status" value="1"/>
</dbReference>
<feature type="chain" id="PRO_0000316330" description="Mlc titration factor A">
    <location>
        <begin position="1"/>
        <end position="270"/>
    </location>
</feature>
<feature type="binding site" evidence="1">
    <location>
        <position position="111"/>
    </location>
    <ligand>
        <name>Zn(2+)</name>
        <dbReference type="ChEBI" id="CHEBI:29105"/>
    </ligand>
</feature>
<feature type="binding site" evidence="1">
    <location>
        <position position="148"/>
    </location>
    <ligand>
        <name>Zn(2+)</name>
        <dbReference type="ChEBI" id="CHEBI:29105"/>
    </ligand>
</feature>
<feature type="binding site" evidence="1">
    <location>
        <position position="152"/>
    </location>
    <ligand>
        <name>Zn(2+)</name>
        <dbReference type="ChEBI" id="CHEBI:29105"/>
    </ligand>
</feature>
<feature type="binding site" evidence="1">
    <location>
        <position position="211"/>
    </location>
    <ligand>
        <name>Zn(2+)</name>
        <dbReference type="ChEBI" id="CHEBI:29105"/>
    </ligand>
</feature>
<sequence length="270" mass="30659">MIKWLWKANKPQAEMLAQWHEALNIPLLAPLNEPEQQRLVSVASQLLQQKRFIPLQGLILTPLMQARLALLFALPVMELGAKWLDGFHEVLIYPSPFIVAEDWQDDLGLVHSGQSVQSGQSWEQGPIVLNWQDIQDSFDLSGFNLVIHEAAHKLDMRNGGHSNGVPPIAMRDVAVWEHDLHHAMDNIQDEIDMVGVEGASMDAYAASNPAECFAVLSEYFFSAPELLEGRFPAVYQHFCRFYRQDPLARLKRWENSLADNPPPENTHSHR</sequence>